<dbReference type="EC" id="5.4.2.12" evidence="1"/>
<dbReference type="EMBL" id="AE014299">
    <property type="protein sequence ID" value="AAN53136.1"/>
    <property type="molecule type" value="Genomic_DNA"/>
</dbReference>
<dbReference type="RefSeq" id="NP_715691.1">
    <property type="nucleotide sequence ID" value="NC_004347.2"/>
</dbReference>
<dbReference type="RefSeq" id="WP_011070464.1">
    <property type="nucleotide sequence ID" value="NC_004347.2"/>
</dbReference>
<dbReference type="SMR" id="P59175"/>
<dbReference type="STRING" id="211586.SO_0049"/>
<dbReference type="PaxDb" id="211586-SO_0049"/>
<dbReference type="KEGG" id="son:SO_0049"/>
<dbReference type="PATRIC" id="fig|211586.12.peg.50"/>
<dbReference type="eggNOG" id="COG0696">
    <property type="taxonomic scope" value="Bacteria"/>
</dbReference>
<dbReference type="HOGENOM" id="CLU_026099_2_0_6"/>
<dbReference type="OrthoDB" id="9800863at2"/>
<dbReference type="PhylomeDB" id="P59175"/>
<dbReference type="BioCyc" id="SONE211586:G1GMP-52-MONOMER"/>
<dbReference type="UniPathway" id="UPA00109">
    <property type="reaction ID" value="UER00186"/>
</dbReference>
<dbReference type="Proteomes" id="UP000008186">
    <property type="component" value="Chromosome"/>
</dbReference>
<dbReference type="GO" id="GO:0005829">
    <property type="term" value="C:cytosol"/>
    <property type="evidence" value="ECO:0000318"/>
    <property type="project" value="GO_Central"/>
</dbReference>
<dbReference type="GO" id="GO:0030145">
    <property type="term" value="F:manganese ion binding"/>
    <property type="evidence" value="ECO:0000318"/>
    <property type="project" value="GO_Central"/>
</dbReference>
<dbReference type="GO" id="GO:0004619">
    <property type="term" value="F:phosphoglycerate mutase activity"/>
    <property type="evidence" value="ECO:0000318"/>
    <property type="project" value="GO_Central"/>
</dbReference>
<dbReference type="GO" id="GO:0005975">
    <property type="term" value="P:carbohydrate metabolic process"/>
    <property type="evidence" value="ECO:0000318"/>
    <property type="project" value="GO_Central"/>
</dbReference>
<dbReference type="GO" id="GO:0006007">
    <property type="term" value="P:glucose catabolic process"/>
    <property type="evidence" value="ECO:0007669"/>
    <property type="project" value="InterPro"/>
</dbReference>
<dbReference type="GO" id="GO:0006096">
    <property type="term" value="P:glycolytic process"/>
    <property type="evidence" value="ECO:0007669"/>
    <property type="project" value="UniProtKB-UniRule"/>
</dbReference>
<dbReference type="CDD" id="cd16010">
    <property type="entry name" value="iPGM"/>
    <property type="match status" value="1"/>
</dbReference>
<dbReference type="FunFam" id="3.40.1450.10:FF:000001">
    <property type="entry name" value="2,3-bisphosphoglycerate-independent phosphoglycerate mutase"/>
    <property type="match status" value="1"/>
</dbReference>
<dbReference type="FunFam" id="3.40.720.10:FF:000001">
    <property type="entry name" value="2,3-bisphosphoglycerate-independent phosphoglycerate mutase"/>
    <property type="match status" value="1"/>
</dbReference>
<dbReference type="Gene3D" id="3.40.720.10">
    <property type="entry name" value="Alkaline Phosphatase, subunit A"/>
    <property type="match status" value="1"/>
</dbReference>
<dbReference type="Gene3D" id="3.40.1450.10">
    <property type="entry name" value="BPG-independent phosphoglycerate mutase, domain B"/>
    <property type="match status" value="1"/>
</dbReference>
<dbReference type="HAMAP" id="MF_01038">
    <property type="entry name" value="GpmI"/>
    <property type="match status" value="1"/>
</dbReference>
<dbReference type="InterPro" id="IPR017850">
    <property type="entry name" value="Alkaline_phosphatase_core_sf"/>
</dbReference>
<dbReference type="InterPro" id="IPR011258">
    <property type="entry name" value="BPG-indep_PGM_N"/>
</dbReference>
<dbReference type="InterPro" id="IPR006124">
    <property type="entry name" value="Metalloenzyme"/>
</dbReference>
<dbReference type="InterPro" id="IPR036646">
    <property type="entry name" value="PGAM_B_sf"/>
</dbReference>
<dbReference type="InterPro" id="IPR005995">
    <property type="entry name" value="Pgm_bpd_ind"/>
</dbReference>
<dbReference type="NCBIfam" id="TIGR01307">
    <property type="entry name" value="pgm_bpd_ind"/>
    <property type="match status" value="1"/>
</dbReference>
<dbReference type="NCBIfam" id="NF003897">
    <property type="entry name" value="PRK05434.1-5"/>
    <property type="match status" value="1"/>
</dbReference>
<dbReference type="PANTHER" id="PTHR31637">
    <property type="entry name" value="2,3-BISPHOSPHOGLYCERATE-INDEPENDENT PHOSPHOGLYCERATE MUTASE"/>
    <property type="match status" value="1"/>
</dbReference>
<dbReference type="PANTHER" id="PTHR31637:SF0">
    <property type="entry name" value="2,3-BISPHOSPHOGLYCERATE-INDEPENDENT PHOSPHOGLYCERATE MUTASE"/>
    <property type="match status" value="1"/>
</dbReference>
<dbReference type="Pfam" id="PF06415">
    <property type="entry name" value="iPGM_N"/>
    <property type="match status" value="1"/>
</dbReference>
<dbReference type="Pfam" id="PF01676">
    <property type="entry name" value="Metalloenzyme"/>
    <property type="match status" value="1"/>
</dbReference>
<dbReference type="PIRSF" id="PIRSF001492">
    <property type="entry name" value="IPGAM"/>
    <property type="match status" value="1"/>
</dbReference>
<dbReference type="SUPFAM" id="SSF64158">
    <property type="entry name" value="2,3-Bisphosphoglycerate-independent phosphoglycerate mutase, substrate-binding domain"/>
    <property type="match status" value="1"/>
</dbReference>
<dbReference type="SUPFAM" id="SSF53649">
    <property type="entry name" value="Alkaline phosphatase-like"/>
    <property type="match status" value="1"/>
</dbReference>
<protein>
    <recommendedName>
        <fullName evidence="1">2,3-bisphosphoglycerate-independent phosphoglycerate mutase</fullName>
        <shortName evidence="1">BPG-independent PGAM</shortName>
        <shortName evidence="1">Phosphoglyceromutase</shortName>
        <shortName evidence="1">iPGM</shortName>
        <ecNumber evidence="1">5.4.2.12</ecNumber>
    </recommendedName>
</protein>
<gene>
    <name evidence="1" type="primary">gpmI</name>
    <name type="synonym">gpmA</name>
    <name type="ordered locus">SO_0049</name>
</gene>
<feature type="chain" id="PRO_0000212201" description="2,3-bisphosphoglycerate-independent phosphoglycerate mutase">
    <location>
        <begin position="1"/>
        <end position="514"/>
    </location>
</feature>
<feature type="active site" description="Phosphoserine intermediate" evidence="1">
    <location>
        <position position="64"/>
    </location>
</feature>
<feature type="binding site" evidence="1">
    <location>
        <position position="14"/>
    </location>
    <ligand>
        <name>Mn(2+)</name>
        <dbReference type="ChEBI" id="CHEBI:29035"/>
        <label>2</label>
    </ligand>
</feature>
<feature type="binding site" evidence="1">
    <location>
        <position position="64"/>
    </location>
    <ligand>
        <name>Mn(2+)</name>
        <dbReference type="ChEBI" id="CHEBI:29035"/>
        <label>2</label>
    </ligand>
</feature>
<feature type="binding site" evidence="1">
    <location>
        <position position="125"/>
    </location>
    <ligand>
        <name>substrate</name>
    </ligand>
</feature>
<feature type="binding site" evidence="1">
    <location>
        <begin position="155"/>
        <end position="156"/>
    </location>
    <ligand>
        <name>substrate</name>
    </ligand>
</feature>
<feature type="binding site" evidence="1">
    <location>
        <position position="187"/>
    </location>
    <ligand>
        <name>substrate</name>
    </ligand>
</feature>
<feature type="binding site" evidence="1">
    <location>
        <position position="193"/>
    </location>
    <ligand>
        <name>substrate</name>
    </ligand>
</feature>
<feature type="binding site" evidence="1">
    <location>
        <begin position="263"/>
        <end position="266"/>
    </location>
    <ligand>
        <name>substrate</name>
    </ligand>
</feature>
<feature type="binding site" evidence="1">
    <location>
        <position position="336"/>
    </location>
    <ligand>
        <name>substrate</name>
    </ligand>
</feature>
<feature type="binding site" evidence="1">
    <location>
        <position position="403"/>
    </location>
    <ligand>
        <name>Mn(2+)</name>
        <dbReference type="ChEBI" id="CHEBI:29035"/>
        <label>1</label>
    </ligand>
</feature>
<feature type="binding site" evidence="1">
    <location>
        <position position="407"/>
    </location>
    <ligand>
        <name>Mn(2+)</name>
        <dbReference type="ChEBI" id="CHEBI:29035"/>
        <label>1</label>
    </ligand>
</feature>
<feature type="binding site" evidence="1">
    <location>
        <position position="444"/>
    </location>
    <ligand>
        <name>Mn(2+)</name>
        <dbReference type="ChEBI" id="CHEBI:29035"/>
        <label>2</label>
    </ligand>
</feature>
<feature type="binding site" evidence="1">
    <location>
        <position position="445"/>
    </location>
    <ligand>
        <name>Mn(2+)</name>
        <dbReference type="ChEBI" id="CHEBI:29035"/>
        <label>2</label>
    </ligand>
</feature>
<feature type="binding site" evidence="1">
    <location>
        <position position="463"/>
    </location>
    <ligand>
        <name>Mn(2+)</name>
        <dbReference type="ChEBI" id="CHEBI:29035"/>
        <label>1</label>
    </ligand>
</feature>
<proteinExistence type="inferred from homology"/>
<organism>
    <name type="scientific">Shewanella oneidensis (strain ATCC 700550 / JCM 31522 / CIP 106686 / LMG 19005 / NCIMB 14063 / MR-1)</name>
    <dbReference type="NCBI Taxonomy" id="211586"/>
    <lineage>
        <taxon>Bacteria</taxon>
        <taxon>Pseudomonadati</taxon>
        <taxon>Pseudomonadota</taxon>
        <taxon>Gammaproteobacteria</taxon>
        <taxon>Alteromonadales</taxon>
        <taxon>Shewanellaceae</taxon>
        <taxon>Shewanella</taxon>
    </lineage>
</organism>
<sequence length="514" mass="55922">MTTTKRPIALLILDGWGYRENTHMNAVYHANTPVLDRLNAQYAHGLISGSGLDVGLPDGQMGNSEVGHINLGSGRIVYQELTRISKAIADHEFEQNPALCDAVDAAVKTGGAVHIMGLLSPGGVHSHEEHIEAMCRMAVARGATKVYLHAFLDGRDTPPRSAKSSLSHFDDLFTTLGHGRIASIIGRYFAMDRDNRWDRVSQAYDLITQGKSKFQYDNAVTALEAAYSRDENDEFVSSSAITDANGQVATLQDGDALIFMNFRADRARQITRSFINPEFDGFARAVTPKVNFVTLTEYAADIKAPIAYPSDNLVNTLGEVLQNRGRTQLRISETEKYAHVTFFFNGGKEEPFNGEDRILINSPKVATYDLQPEMSSTELTDKLVAAIESTKYDVIICNYPNGDMVGHTGNFDAAVKACEAVDACIGRVVEALAKVGGECIITADHGNAEQMTDETTGQAHTAHTSELVPFVFVGRDATIDKGGKLSDVAPTILHLMGESIPAEMTGKPLIHVKE</sequence>
<comment type="function">
    <text evidence="1">Catalyzes the interconversion of 2-phosphoglycerate and 3-phosphoglycerate.</text>
</comment>
<comment type="catalytic activity">
    <reaction evidence="1">
        <text>(2R)-2-phosphoglycerate = (2R)-3-phosphoglycerate</text>
        <dbReference type="Rhea" id="RHEA:15901"/>
        <dbReference type="ChEBI" id="CHEBI:58272"/>
        <dbReference type="ChEBI" id="CHEBI:58289"/>
        <dbReference type="EC" id="5.4.2.12"/>
    </reaction>
</comment>
<comment type="cofactor">
    <cofactor evidence="1">
        <name>Mn(2+)</name>
        <dbReference type="ChEBI" id="CHEBI:29035"/>
    </cofactor>
    <text evidence="1">Binds 2 manganese ions per subunit.</text>
</comment>
<comment type="pathway">
    <text evidence="1">Carbohydrate degradation; glycolysis; pyruvate from D-glyceraldehyde 3-phosphate: step 3/5.</text>
</comment>
<comment type="subunit">
    <text evidence="1">Monomer.</text>
</comment>
<comment type="similarity">
    <text evidence="1">Belongs to the BPG-independent phosphoglycerate mutase family.</text>
</comment>
<accession>P59175</accession>
<evidence type="ECO:0000255" key="1">
    <source>
        <dbReference type="HAMAP-Rule" id="MF_01038"/>
    </source>
</evidence>
<name>GPMI_SHEON</name>
<keyword id="KW-0324">Glycolysis</keyword>
<keyword id="KW-0413">Isomerase</keyword>
<keyword id="KW-0464">Manganese</keyword>
<keyword id="KW-0479">Metal-binding</keyword>
<keyword id="KW-1185">Reference proteome</keyword>
<reference key="1">
    <citation type="journal article" date="2002" name="Nat. Biotechnol.">
        <title>Genome sequence of the dissimilatory metal ion-reducing bacterium Shewanella oneidensis.</title>
        <authorList>
            <person name="Heidelberg J.F."/>
            <person name="Paulsen I.T."/>
            <person name="Nelson K.E."/>
            <person name="Gaidos E.J."/>
            <person name="Nelson W.C."/>
            <person name="Read T.D."/>
            <person name="Eisen J.A."/>
            <person name="Seshadri R."/>
            <person name="Ward N.L."/>
            <person name="Methe B.A."/>
            <person name="Clayton R.A."/>
            <person name="Meyer T."/>
            <person name="Tsapin A."/>
            <person name="Scott J."/>
            <person name="Beanan M.J."/>
            <person name="Brinkac L.M."/>
            <person name="Daugherty S.C."/>
            <person name="DeBoy R.T."/>
            <person name="Dodson R.J."/>
            <person name="Durkin A.S."/>
            <person name="Haft D.H."/>
            <person name="Kolonay J.F."/>
            <person name="Madupu R."/>
            <person name="Peterson J.D."/>
            <person name="Umayam L.A."/>
            <person name="White O."/>
            <person name="Wolf A.M."/>
            <person name="Vamathevan J.J."/>
            <person name="Weidman J.F."/>
            <person name="Impraim M."/>
            <person name="Lee K."/>
            <person name="Berry K.J."/>
            <person name="Lee C."/>
            <person name="Mueller J."/>
            <person name="Khouri H.M."/>
            <person name="Gill J."/>
            <person name="Utterback T.R."/>
            <person name="McDonald L.A."/>
            <person name="Feldblyum T.V."/>
            <person name="Smith H.O."/>
            <person name="Venter J.C."/>
            <person name="Nealson K.H."/>
            <person name="Fraser C.M."/>
        </authorList>
    </citation>
    <scope>NUCLEOTIDE SEQUENCE [LARGE SCALE GENOMIC DNA]</scope>
    <source>
        <strain>ATCC 700550 / JCM 31522 / CIP 106686 / LMG 19005 / NCIMB 14063 / MR-1</strain>
    </source>
</reference>